<name>PEX5_KLULA</name>
<evidence type="ECO:0000250" key="1">
    <source>
        <dbReference type="UniProtKB" id="A0A1L8FDW4"/>
    </source>
</evidence>
<evidence type="ECO:0000250" key="2">
    <source>
        <dbReference type="UniProtKB" id="P35056"/>
    </source>
</evidence>
<evidence type="ECO:0000250" key="3">
    <source>
        <dbReference type="UniProtKB" id="P50542"/>
    </source>
</evidence>
<evidence type="ECO:0000256" key="4">
    <source>
        <dbReference type="SAM" id="MobiDB-lite"/>
    </source>
</evidence>
<evidence type="ECO:0000305" key="5"/>
<proteinExistence type="inferred from homology"/>
<accession>Q6CT48</accession>
<keyword id="KW-0963">Cytoplasm</keyword>
<keyword id="KW-1017">Isopeptide bond</keyword>
<keyword id="KW-0576">Peroxisome</keyword>
<keyword id="KW-0653">Protein transport</keyword>
<keyword id="KW-1185">Reference proteome</keyword>
<keyword id="KW-0677">Repeat</keyword>
<keyword id="KW-0882">Thioester bond</keyword>
<keyword id="KW-0802">TPR repeat</keyword>
<keyword id="KW-0811">Translocation</keyword>
<keyword id="KW-0813">Transport</keyword>
<keyword id="KW-0832">Ubl conjugation</keyword>
<protein>
    <recommendedName>
        <fullName>Peroxisomal targeting signal receptor</fullName>
        <shortName>PTS1 receptor</shortName>
        <shortName>PTS1R</shortName>
    </recommendedName>
    <alternativeName>
        <fullName>Peroxin-5</fullName>
    </alternativeName>
</protein>
<reference key="1">
    <citation type="journal article" date="2004" name="Nature">
        <title>Genome evolution in yeasts.</title>
        <authorList>
            <person name="Dujon B."/>
            <person name="Sherman D."/>
            <person name="Fischer G."/>
            <person name="Durrens P."/>
            <person name="Casaregola S."/>
            <person name="Lafontaine I."/>
            <person name="de Montigny J."/>
            <person name="Marck C."/>
            <person name="Neuveglise C."/>
            <person name="Talla E."/>
            <person name="Goffard N."/>
            <person name="Frangeul L."/>
            <person name="Aigle M."/>
            <person name="Anthouard V."/>
            <person name="Babour A."/>
            <person name="Barbe V."/>
            <person name="Barnay S."/>
            <person name="Blanchin S."/>
            <person name="Beckerich J.-M."/>
            <person name="Beyne E."/>
            <person name="Bleykasten C."/>
            <person name="Boisrame A."/>
            <person name="Boyer J."/>
            <person name="Cattolico L."/>
            <person name="Confanioleri F."/>
            <person name="de Daruvar A."/>
            <person name="Despons L."/>
            <person name="Fabre E."/>
            <person name="Fairhead C."/>
            <person name="Ferry-Dumazet H."/>
            <person name="Groppi A."/>
            <person name="Hantraye F."/>
            <person name="Hennequin C."/>
            <person name="Jauniaux N."/>
            <person name="Joyet P."/>
            <person name="Kachouri R."/>
            <person name="Kerrest A."/>
            <person name="Koszul R."/>
            <person name="Lemaire M."/>
            <person name="Lesur I."/>
            <person name="Ma L."/>
            <person name="Muller H."/>
            <person name="Nicaud J.-M."/>
            <person name="Nikolski M."/>
            <person name="Oztas S."/>
            <person name="Ozier-Kalogeropoulos O."/>
            <person name="Pellenz S."/>
            <person name="Potier S."/>
            <person name="Richard G.-F."/>
            <person name="Straub M.-L."/>
            <person name="Suleau A."/>
            <person name="Swennen D."/>
            <person name="Tekaia F."/>
            <person name="Wesolowski-Louvel M."/>
            <person name="Westhof E."/>
            <person name="Wirth B."/>
            <person name="Zeniou-Meyer M."/>
            <person name="Zivanovic Y."/>
            <person name="Bolotin-Fukuhara M."/>
            <person name="Thierry A."/>
            <person name="Bouchier C."/>
            <person name="Caudron B."/>
            <person name="Scarpelli C."/>
            <person name="Gaillardin C."/>
            <person name="Weissenbach J."/>
            <person name="Wincker P."/>
            <person name="Souciet J.-L."/>
        </authorList>
    </citation>
    <scope>NUCLEOTIDE SEQUENCE [LARGE SCALE GENOMIC DNA]</scope>
    <source>
        <strain>ATCC 8585 / CBS 2359 / DSM 70799 / NBRC 1267 / NRRL Y-1140 / WM37</strain>
    </source>
</reference>
<gene>
    <name type="primary">PEX5</name>
    <name type="ordered locus">KLLA0C15455g</name>
</gene>
<sequence length="566" mass="63386">MSADCSVGSNPLAQLNKHAQQNPALRQVGYQNPASNVAQNFKTHVNEVSNANRFQMDQFMNRSPGFSDGQLGMAPVPSAILSHGPRFGLKKQDSGSSNMSAGDTAQHSRSWGNEFNSRSPQQGLASRVNNVERISNTNSMSSYRPGMSRIGRPMMHTGISSLHNYSHMSQQTPQMSSDDGVLADKQWNEQFEALEKAVAENLTMEDNKEETKEEIVVEDGYQADFQEVWDKLQAETADNNLETSDSQWEKDYARYMTGKATHIPPYRFDNDNQYMHNPNAYEIGCILMENGAKLSEAALAFEAAVQEDPAHVDAWLKLGLVQTQNEKEMNGISALEQCLSLDPTNQQALMTISISYINEGYDLTAFSMLNRWLDSKYPELTRSPTIDEANIDRFNLSKQVITKYLQVANALPQVDPEVQLGLGTLFYANEEFGKTIDCFRTALEVNPNDELMWNRLGASLANSNRSEEAIQAYHKALALKPSFVRARYNLAISSMNIGCYKEAAESLLSALSMHEVENVPITGSVVQSNNILETLKRSFVAMDRRDLLEKVMPGMDLQQFRNEFNF</sequence>
<comment type="function">
    <text evidence="2">Receptor that mediates peroxisomal import of proteins containing a C-terminal PTS1-type tripeptide peroxisomal targeting signal (SKL-type). Binds to cargo proteins containing a PTS1 peroxisomal targeting signal in the cytosol, and translocates them into the peroxisome matrix by passing through the PEX13-PEX14 docking complex along with cargo proteins. PEX5 receptor is then retrotranslocated into the cytosol, leading to release of bound cargo in the peroxisome matrix, and reset for a subsequent peroxisome import cycle.</text>
</comment>
<comment type="subunit">
    <text evidence="2">Interacts (via WxxxF/Y and LVxEF motifs) with PEX14; promoting translocation through the PEX13-PEX14 docking complex.</text>
</comment>
<comment type="subcellular location">
    <subcellularLocation>
        <location evidence="2">Cytoplasm</location>
        <location evidence="2">Cytosol</location>
    </subcellularLocation>
    <subcellularLocation>
        <location evidence="2">Peroxisome matrix</location>
    </subcellularLocation>
    <text evidence="2 3">Cycles between the cytosol and the peroxisome matrix. Following binding to cargo proteins containing a PTS1 peroxisomal targeting signal in the cytosol, recruited to the docking complex, composed of PEX13 and PEX14, leading to translocation into the peroxisome matrix along with cargo proteins. Export and recycling to the cytosol is initiated by binding to the PEX2-PEX10-PEX12 ligase complex via its unstructured N-terminus that inserts into the ligase pore and emerges in the cytosol. Cys-5 of PEX5 is then monoubiquitinated, promoting its extraction from peroxisomal membrane by the PEX1-PEX6 AAA ATPase complex (By similarity). Extraction is accompanied by unfolding of the TPR repeats and release of bound cargo in the peroxisome matrix (By similarity). The TPR repeats refold in the cytosol and ubiquitination is removed by deubiquitinating enzyme UBP15, resetting PEX5 for a subsequent import cycle (By similarity).</text>
</comment>
<comment type="domain">
    <text evidence="1">The TPR repeats mediate interaction with proteins containing a C-terminal PTS1-type tripeptide peroxisomal targeting signal (SKL-type).</text>
</comment>
<comment type="domain">
    <text evidence="1">The WxxxF/Y motifs mediate interaction with PEX14, promoting association with the PEX13-PEX14 docking complex.</text>
</comment>
<comment type="domain">
    <text evidence="1">The amphipathic helix 1 and 2 (AH1 and AH2, respectively) are required for PEX5 retrotranslocation and recycling. AH2 mediates interaction with lumenal side of the PEX2-PEX10-PEX12 ligase complex, while AH1 is required for extraction from peroxisomal membrane by the PEX1-PEX6 AAA ATPase complex.</text>
</comment>
<comment type="PTM">
    <text evidence="2">Monoubiquitinated at Cys-5 by PEX2 during PEX5 passage through the retrotranslocation channel: monoubiquitination acts as a signal for PEX5 extraction and is required for proper export from peroxisomes and recycling. When PEX5 recycling is compromised, polyubiquitinated at Lys-17 by PEX10 during its passage through the retrotranslocation channel, leading to its degradation.</text>
</comment>
<comment type="similarity">
    <text evidence="5">Belongs to the peroxisomal targeting signal receptor family.</text>
</comment>
<organism>
    <name type="scientific">Kluyveromyces lactis (strain ATCC 8585 / CBS 2359 / DSM 70799 / NBRC 1267 / NRRL Y-1140 / WM37)</name>
    <name type="common">Yeast</name>
    <name type="synonym">Candida sphaerica</name>
    <dbReference type="NCBI Taxonomy" id="284590"/>
    <lineage>
        <taxon>Eukaryota</taxon>
        <taxon>Fungi</taxon>
        <taxon>Dikarya</taxon>
        <taxon>Ascomycota</taxon>
        <taxon>Saccharomycotina</taxon>
        <taxon>Saccharomycetes</taxon>
        <taxon>Saccharomycetales</taxon>
        <taxon>Saccharomycetaceae</taxon>
        <taxon>Kluyveromyces</taxon>
    </lineage>
</organism>
<dbReference type="EMBL" id="CR382123">
    <property type="protein sequence ID" value="CAH01742.1"/>
    <property type="molecule type" value="Genomic_DNA"/>
</dbReference>
<dbReference type="RefSeq" id="XP_452891.1">
    <property type="nucleotide sequence ID" value="XM_452891.1"/>
</dbReference>
<dbReference type="SMR" id="Q6CT48"/>
<dbReference type="FunCoup" id="Q6CT48">
    <property type="interactions" value="110"/>
</dbReference>
<dbReference type="STRING" id="284590.Q6CT48"/>
<dbReference type="PaxDb" id="284590-Q6CT48"/>
<dbReference type="KEGG" id="kla:KLLA0_C15455g"/>
<dbReference type="eggNOG" id="KOG1125">
    <property type="taxonomic scope" value="Eukaryota"/>
</dbReference>
<dbReference type="HOGENOM" id="CLU_013516_3_0_1"/>
<dbReference type="InParanoid" id="Q6CT48"/>
<dbReference type="OMA" id="WEEQFKQ"/>
<dbReference type="Proteomes" id="UP000000598">
    <property type="component" value="Chromosome C"/>
</dbReference>
<dbReference type="GO" id="GO:0005829">
    <property type="term" value="C:cytosol"/>
    <property type="evidence" value="ECO:0007669"/>
    <property type="project" value="UniProtKB-SubCell"/>
</dbReference>
<dbReference type="GO" id="GO:0005782">
    <property type="term" value="C:peroxisomal matrix"/>
    <property type="evidence" value="ECO:0007669"/>
    <property type="project" value="UniProtKB-SubCell"/>
</dbReference>
<dbReference type="GO" id="GO:0005778">
    <property type="term" value="C:peroxisomal membrane"/>
    <property type="evidence" value="ECO:0007669"/>
    <property type="project" value="TreeGrafter"/>
</dbReference>
<dbReference type="GO" id="GO:0005052">
    <property type="term" value="F:peroxisome matrix targeting signal-1 binding"/>
    <property type="evidence" value="ECO:0007669"/>
    <property type="project" value="TreeGrafter"/>
</dbReference>
<dbReference type="GO" id="GO:0016560">
    <property type="term" value="P:protein import into peroxisome matrix, docking"/>
    <property type="evidence" value="ECO:0007669"/>
    <property type="project" value="TreeGrafter"/>
</dbReference>
<dbReference type="Gene3D" id="1.25.40.10">
    <property type="entry name" value="Tetratricopeptide repeat domain"/>
    <property type="match status" value="1"/>
</dbReference>
<dbReference type="InterPro" id="IPR024111">
    <property type="entry name" value="PEX5/PEX5L"/>
</dbReference>
<dbReference type="InterPro" id="IPR011990">
    <property type="entry name" value="TPR-like_helical_dom_sf"/>
</dbReference>
<dbReference type="InterPro" id="IPR019734">
    <property type="entry name" value="TPR_rpt"/>
</dbReference>
<dbReference type="PANTHER" id="PTHR10130:SF0">
    <property type="entry name" value="GH08708P"/>
    <property type="match status" value="1"/>
</dbReference>
<dbReference type="PANTHER" id="PTHR10130">
    <property type="entry name" value="PEROXISOMAL TARGETING SIGNAL 1 RECEPTOR PEX5"/>
    <property type="match status" value="1"/>
</dbReference>
<dbReference type="Pfam" id="PF13432">
    <property type="entry name" value="TPR_16"/>
    <property type="match status" value="2"/>
</dbReference>
<dbReference type="SMART" id="SM00028">
    <property type="entry name" value="TPR"/>
    <property type="match status" value="4"/>
</dbReference>
<dbReference type="SUPFAM" id="SSF48452">
    <property type="entry name" value="TPR-like"/>
    <property type="match status" value="1"/>
</dbReference>
<dbReference type="PROSITE" id="PS50005">
    <property type="entry name" value="TPR"/>
    <property type="match status" value="5"/>
</dbReference>
<dbReference type="PROSITE" id="PS50293">
    <property type="entry name" value="TPR_REGION"/>
    <property type="match status" value="1"/>
</dbReference>
<feature type="chain" id="PRO_0000106311" description="Peroxisomal targeting signal receptor">
    <location>
        <begin position="1"/>
        <end position="566"/>
    </location>
</feature>
<feature type="repeat" description="TPR 1">
    <location>
        <begin position="277"/>
        <end position="311"/>
    </location>
</feature>
<feature type="repeat" description="TPR 2">
    <location>
        <begin position="312"/>
        <end position="345"/>
    </location>
</feature>
<feature type="repeat" description="TPR 3">
    <location>
        <begin position="416"/>
        <end position="449"/>
    </location>
</feature>
<feature type="repeat" description="TPR 4">
    <location>
        <begin position="451"/>
        <end position="483"/>
    </location>
</feature>
<feature type="repeat" description="TPR 5">
    <location>
        <begin position="485"/>
        <end position="517"/>
    </location>
</feature>
<feature type="region of interest" description="Amphipathic helix 1 (AH1)" evidence="1">
    <location>
        <begin position="6"/>
        <end position="28"/>
    </location>
</feature>
<feature type="region of interest" description="Amphipathic helix 2 (AH2)" evidence="1">
    <location>
        <begin position="53"/>
        <end position="71"/>
    </location>
</feature>
<feature type="region of interest" description="Disordered" evidence="4">
    <location>
        <begin position="88"/>
        <end position="159"/>
    </location>
</feature>
<feature type="region of interest" description="Amphipathic helix 3 (AH3)" evidence="1">
    <location>
        <begin position="145"/>
        <end position="151"/>
    </location>
</feature>
<feature type="region of interest" description="Amphipathic helix 4 (AH4)" evidence="1">
    <location>
        <begin position="225"/>
        <end position="241"/>
    </location>
</feature>
<feature type="short sequence motif" description="WxxxF/Y motif 1" evidence="1">
    <location>
        <begin position="111"/>
        <end position="115"/>
    </location>
</feature>
<feature type="short sequence motif" description="WxxxF/Y motif 2" evidence="1">
    <location>
        <begin position="187"/>
        <end position="191"/>
    </location>
</feature>
<feature type="short sequence motif" description="WxxxF/Y motif 3" evidence="1">
    <location>
        <begin position="248"/>
        <end position="252"/>
    </location>
</feature>
<feature type="compositionally biased region" description="Polar residues" evidence="4">
    <location>
        <begin position="94"/>
        <end position="142"/>
    </location>
</feature>
<feature type="cross-link" description="Glycyl cysteine thioester (Cys-Gly) (interchain with G-Cter in ubiquitin)" evidence="2">
    <location>
        <position position="5"/>
    </location>
</feature>
<feature type="cross-link" description="Glycyl lysine isopeptide (Lys-Gly) (interchain with G-Cter in ubiquitin)" evidence="2">
    <location>
        <position position="17"/>
    </location>
</feature>